<proteinExistence type="evidence at transcript level"/>
<keyword id="KW-0963">Cytoplasm</keyword>
<keyword id="KW-0479">Metal-binding</keyword>
<keyword id="KW-0520">NAD</keyword>
<keyword id="KW-0560">Oxidoreductase</keyword>
<keyword id="KW-1185">Reference proteome</keyword>
<keyword id="KW-0862">Zinc</keyword>
<organism>
    <name type="scientific">Arabidopsis thaliana</name>
    <name type="common">Mouse-ear cress</name>
    <dbReference type="NCBI Taxonomy" id="3702"/>
    <lineage>
        <taxon>Eukaryota</taxon>
        <taxon>Viridiplantae</taxon>
        <taxon>Streptophyta</taxon>
        <taxon>Embryophyta</taxon>
        <taxon>Tracheophyta</taxon>
        <taxon>Spermatophyta</taxon>
        <taxon>Magnoliopsida</taxon>
        <taxon>eudicotyledons</taxon>
        <taxon>Gunneridae</taxon>
        <taxon>Pentapetalae</taxon>
        <taxon>rosids</taxon>
        <taxon>malvids</taxon>
        <taxon>Brassicales</taxon>
        <taxon>Brassicaceae</taxon>
        <taxon>Camelineae</taxon>
        <taxon>Arabidopsis</taxon>
    </lineage>
</organism>
<name>ADHL7_ARATH</name>
<evidence type="ECO:0000250" key="1">
    <source>
        <dbReference type="UniProtKB" id="P00327"/>
    </source>
</evidence>
<evidence type="ECO:0000250" key="2">
    <source>
        <dbReference type="UniProtKB" id="P06525"/>
    </source>
</evidence>
<evidence type="ECO:0000305" key="3"/>
<dbReference type="EC" id="1.1.1.1" evidence="2"/>
<dbReference type="EMBL" id="AB023032">
    <property type="protein sequence ID" value="BAB10198.1"/>
    <property type="molecule type" value="Genomic_DNA"/>
</dbReference>
<dbReference type="EMBL" id="CP002688">
    <property type="protein sequence ID" value="AED94788.1"/>
    <property type="molecule type" value="Genomic_DNA"/>
</dbReference>
<dbReference type="EMBL" id="AY081332">
    <property type="protein sequence ID" value="AAL91221.1"/>
    <property type="molecule type" value="mRNA"/>
</dbReference>
<dbReference type="EMBL" id="AY128827">
    <property type="protein sequence ID" value="AAM91227.1"/>
    <property type="molecule type" value="mRNA"/>
</dbReference>
<dbReference type="RefSeq" id="NP_199040.1">
    <property type="nucleotide sequence ID" value="NM_123590.6"/>
</dbReference>
<dbReference type="SMR" id="Q9FH04"/>
<dbReference type="FunCoup" id="Q9FH04">
    <property type="interactions" value="360"/>
</dbReference>
<dbReference type="STRING" id="3702.Q9FH04"/>
<dbReference type="PaxDb" id="3702-AT5G42250.1"/>
<dbReference type="ProteomicsDB" id="244387"/>
<dbReference type="EnsemblPlants" id="AT5G42250.1">
    <property type="protein sequence ID" value="AT5G42250.1"/>
    <property type="gene ID" value="AT5G42250"/>
</dbReference>
<dbReference type="GeneID" id="834230"/>
<dbReference type="Gramene" id="AT5G42250.1">
    <property type="protein sequence ID" value="AT5G42250.1"/>
    <property type="gene ID" value="AT5G42250"/>
</dbReference>
<dbReference type="KEGG" id="ath:AT5G42250"/>
<dbReference type="Araport" id="AT5G42250"/>
<dbReference type="TAIR" id="AT5G42250"/>
<dbReference type="eggNOG" id="KOG0022">
    <property type="taxonomic scope" value="Eukaryota"/>
</dbReference>
<dbReference type="HOGENOM" id="CLU_026673_14_0_1"/>
<dbReference type="InParanoid" id="Q9FH04"/>
<dbReference type="OMA" id="AYACCRQ"/>
<dbReference type="PhylomeDB" id="Q9FH04"/>
<dbReference type="BioCyc" id="ARA:AT5G42250-MONOMER"/>
<dbReference type="PRO" id="PR:Q9FH04"/>
<dbReference type="Proteomes" id="UP000006548">
    <property type="component" value="Chromosome 5"/>
</dbReference>
<dbReference type="ExpressionAtlas" id="Q9FH04">
    <property type="expression patterns" value="baseline and differential"/>
</dbReference>
<dbReference type="GO" id="GO:0005737">
    <property type="term" value="C:cytoplasm"/>
    <property type="evidence" value="ECO:0007669"/>
    <property type="project" value="UniProtKB-SubCell"/>
</dbReference>
<dbReference type="GO" id="GO:0004022">
    <property type="term" value="F:alcohol dehydrogenase (NAD+) activity"/>
    <property type="evidence" value="ECO:0007669"/>
    <property type="project" value="UniProtKB-EC"/>
</dbReference>
<dbReference type="GO" id="GO:0008270">
    <property type="term" value="F:zinc ion binding"/>
    <property type="evidence" value="ECO:0007669"/>
    <property type="project" value="InterPro"/>
</dbReference>
<dbReference type="CDD" id="cd08301">
    <property type="entry name" value="alcohol_DH_plants"/>
    <property type="match status" value="1"/>
</dbReference>
<dbReference type="FunFam" id="3.90.180.10:FF:000007">
    <property type="entry name" value="Alcohol dehydrogenase 6"/>
    <property type="match status" value="1"/>
</dbReference>
<dbReference type="FunFam" id="3.40.50.720:FF:000003">
    <property type="entry name" value="S-(hydroxymethyl)glutathione dehydrogenase"/>
    <property type="match status" value="1"/>
</dbReference>
<dbReference type="Gene3D" id="3.90.180.10">
    <property type="entry name" value="Medium-chain alcohol dehydrogenases, catalytic domain"/>
    <property type="match status" value="1"/>
</dbReference>
<dbReference type="Gene3D" id="3.40.50.720">
    <property type="entry name" value="NAD(P)-binding Rossmann-like Domain"/>
    <property type="match status" value="1"/>
</dbReference>
<dbReference type="InterPro" id="IPR013149">
    <property type="entry name" value="ADH-like_C"/>
</dbReference>
<dbReference type="InterPro" id="IPR013154">
    <property type="entry name" value="ADH-like_N"/>
</dbReference>
<dbReference type="InterPro" id="IPR002328">
    <property type="entry name" value="ADH_Zn_CS"/>
</dbReference>
<dbReference type="InterPro" id="IPR011032">
    <property type="entry name" value="GroES-like_sf"/>
</dbReference>
<dbReference type="InterPro" id="IPR036291">
    <property type="entry name" value="NAD(P)-bd_dom_sf"/>
</dbReference>
<dbReference type="PANTHER" id="PTHR43880">
    <property type="entry name" value="ALCOHOL DEHYDROGENASE"/>
    <property type="match status" value="1"/>
</dbReference>
<dbReference type="PANTHER" id="PTHR43880:SF7">
    <property type="entry name" value="ALCOHOL DEHYDROGENASE-LIKE 7"/>
    <property type="match status" value="1"/>
</dbReference>
<dbReference type="Pfam" id="PF08240">
    <property type="entry name" value="ADH_N"/>
    <property type="match status" value="1"/>
</dbReference>
<dbReference type="Pfam" id="PF00107">
    <property type="entry name" value="ADH_zinc_N"/>
    <property type="match status" value="1"/>
</dbReference>
<dbReference type="SUPFAM" id="SSF50129">
    <property type="entry name" value="GroES-like"/>
    <property type="match status" value="2"/>
</dbReference>
<dbReference type="SUPFAM" id="SSF51735">
    <property type="entry name" value="NAD(P)-binding Rossmann-fold domains"/>
    <property type="match status" value="1"/>
</dbReference>
<dbReference type="PROSITE" id="PS00059">
    <property type="entry name" value="ADH_ZINC"/>
    <property type="match status" value="1"/>
</dbReference>
<protein>
    <recommendedName>
        <fullName>Alcohol dehydrogenase-like 7</fullName>
        <ecNumber evidence="2">1.1.1.1</ecNumber>
    </recommendedName>
</protein>
<sequence length="390" mass="42568">MENGNSSSDNKSSHKPIRCKAAVSRKAGEPLVMEEIMVAPPQPFEVRIRIICTALCHSDVTFWKLQVPPACFPRILGHEAIGVVESVGENVKEVVEGDTVLPTFMPDCGDCVDCKSHKSNLCSKFPFKVSPWMPRYDNSSRFTDLNGETLFHFLNVSSFSEYTVLDVANVVKIDSSIPPSRACLLSCGVSTGVGAAWETAKVEKGSTVVIFGLGSIGLAVAEGARLCGASRIIGVDINPTKFQVGQKFGVTEFVNSMTCEKNRVSEVINEMTDGGADYCFECVGSSSLVQEAYACCRQGWGKTITLGVDKPGSQICLDSFDVLHHGKILMGSLFGGLKAKTHIPILLKRYLSNELELDKFVTHEMKFEEINDAFQLLLEGKCIRCVLWMG</sequence>
<accession>Q9FH04</accession>
<feature type="chain" id="PRO_0000299189" description="Alcohol dehydrogenase-like 7">
    <location>
        <begin position="1"/>
        <end position="390"/>
    </location>
</feature>
<feature type="binding site" evidence="2">
    <location>
        <position position="56"/>
    </location>
    <ligand>
        <name>Zn(2+)</name>
        <dbReference type="ChEBI" id="CHEBI:29105"/>
        <label>1</label>
        <note>catalytic</note>
    </ligand>
</feature>
<feature type="binding site" evidence="2">
    <location>
        <position position="58"/>
    </location>
    <ligand>
        <name>an alcohol</name>
        <dbReference type="ChEBI" id="CHEBI:30879"/>
    </ligand>
</feature>
<feature type="binding site" evidence="2">
    <location>
        <position position="58"/>
    </location>
    <ligand>
        <name>NAD(+)</name>
        <dbReference type="ChEBI" id="CHEBI:57540"/>
    </ligand>
</feature>
<feature type="binding site" evidence="2">
    <location>
        <position position="58"/>
    </location>
    <ligand>
        <name>Zn(2+)</name>
        <dbReference type="ChEBI" id="CHEBI:29105"/>
        <label>1</label>
        <note>catalytic</note>
    </ligand>
</feature>
<feature type="binding site" evidence="1">
    <location>
        <position position="78"/>
    </location>
    <ligand>
        <name>an alcohol</name>
        <dbReference type="ChEBI" id="CHEBI:30879"/>
    </ligand>
</feature>
<feature type="binding site" evidence="2">
    <location>
        <position position="78"/>
    </location>
    <ligand>
        <name>Zn(2+)</name>
        <dbReference type="ChEBI" id="CHEBI:29105"/>
        <label>1</label>
        <note>catalytic</note>
    </ligand>
</feature>
<feature type="binding site" evidence="2">
    <location>
        <position position="108"/>
    </location>
    <ligand>
        <name>Zn(2+)</name>
        <dbReference type="ChEBI" id="CHEBI:29105"/>
        <label>2</label>
    </ligand>
</feature>
<feature type="binding site" evidence="2">
    <location>
        <position position="111"/>
    </location>
    <ligand>
        <name>Zn(2+)</name>
        <dbReference type="ChEBI" id="CHEBI:29105"/>
        <label>2</label>
    </ligand>
</feature>
<feature type="binding site" evidence="2">
    <location>
        <position position="114"/>
    </location>
    <ligand>
        <name>Zn(2+)</name>
        <dbReference type="ChEBI" id="CHEBI:29105"/>
        <label>2</label>
    </ligand>
</feature>
<feature type="binding site" evidence="2">
    <location>
        <position position="122"/>
    </location>
    <ligand>
        <name>Zn(2+)</name>
        <dbReference type="ChEBI" id="CHEBI:29105"/>
        <label>2</label>
    </ligand>
</feature>
<feature type="binding site" evidence="2">
    <location>
        <position position="187"/>
    </location>
    <ligand>
        <name>Zn(2+)</name>
        <dbReference type="ChEBI" id="CHEBI:29105"/>
        <label>1</label>
        <note>catalytic</note>
    </ligand>
</feature>
<feature type="binding site" evidence="2">
    <location>
        <begin position="212"/>
        <end position="217"/>
    </location>
    <ligand>
        <name>NAD(+)</name>
        <dbReference type="ChEBI" id="CHEBI:57540"/>
    </ligand>
</feature>
<feature type="binding site" evidence="2">
    <location>
        <position position="236"/>
    </location>
    <ligand>
        <name>NAD(+)</name>
        <dbReference type="ChEBI" id="CHEBI:57540"/>
    </ligand>
</feature>
<feature type="binding site" evidence="2">
    <location>
        <position position="241"/>
    </location>
    <ligand>
        <name>NAD(+)</name>
        <dbReference type="ChEBI" id="CHEBI:57540"/>
    </ligand>
</feature>
<feature type="binding site" evidence="1">
    <location>
        <begin position="306"/>
        <end position="308"/>
    </location>
    <ligand>
        <name>NAD(+)</name>
        <dbReference type="ChEBI" id="CHEBI:57540"/>
    </ligand>
</feature>
<feature type="binding site" evidence="2">
    <location>
        <position position="334"/>
    </location>
    <ligand>
        <name>NAD(+)</name>
        <dbReference type="ChEBI" id="CHEBI:57540"/>
    </ligand>
</feature>
<feature type="binding site" evidence="2">
    <location>
        <position position="384"/>
    </location>
    <ligand>
        <name>NAD(+)</name>
        <dbReference type="ChEBI" id="CHEBI:57540"/>
    </ligand>
</feature>
<gene>
    <name type="ordered locus">At5g42250</name>
    <name type="ORF">K5J14.5</name>
</gene>
<comment type="catalytic activity">
    <reaction evidence="2">
        <text>a primary alcohol + NAD(+) = an aldehyde + NADH + H(+)</text>
        <dbReference type="Rhea" id="RHEA:10736"/>
        <dbReference type="ChEBI" id="CHEBI:15378"/>
        <dbReference type="ChEBI" id="CHEBI:15734"/>
        <dbReference type="ChEBI" id="CHEBI:17478"/>
        <dbReference type="ChEBI" id="CHEBI:57540"/>
        <dbReference type="ChEBI" id="CHEBI:57945"/>
        <dbReference type="EC" id="1.1.1.1"/>
    </reaction>
</comment>
<comment type="catalytic activity">
    <reaction evidence="2">
        <text>a secondary alcohol + NAD(+) = a ketone + NADH + H(+)</text>
        <dbReference type="Rhea" id="RHEA:10740"/>
        <dbReference type="ChEBI" id="CHEBI:15378"/>
        <dbReference type="ChEBI" id="CHEBI:17087"/>
        <dbReference type="ChEBI" id="CHEBI:35681"/>
        <dbReference type="ChEBI" id="CHEBI:57540"/>
        <dbReference type="ChEBI" id="CHEBI:57945"/>
        <dbReference type="EC" id="1.1.1.1"/>
    </reaction>
</comment>
<comment type="cofactor">
    <cofactor evidence="2">
        <name>Zn(2+)</name>
        <dbReference type="ChEBI" id="CHEBI:29105"/>
    </cofactor>
    <text evidence="2">Binds 2 Zn(2+) ions per subunit.</text>
</comment>
<comment type="subunit">
    <text evidence="2">Homodimer.</text>
</comment>
<comment type="subcellular location">
    <subcellularLocation>
        <location evidence="2">Cytoplasm</location>
    </subcellularLocation>
</comment>
<comment type="similarity">
    <text evidence="3">Belongs to the zinc-containing alcohol dehydrogenase family. Class-III subfamily.</text>
</comment>
<reference key="1">
    <citation type="journal article" date="2000" name="DNA Res.">
        <title>Structural analysis of Arabidopsis thaliana chromosome 5. X. Sequence features of the regions of 3,076,755 bp covered by sixty P1 and TAC clones.</title>
        <authorList>
            <person name="Sato S."/>
            <person name="Nakamura Y."/>
            <person name="Kaneko T."/>
            <person name="Katoh T."/>
            <person name="Asamizu E."/>
            <person name="Kotani H."/>
            <person name="Tabata S."/>
        </authorList>
    </citation>
    <scope>NUCLEOTIDE SEQUENCE [LARGE SCALE GENOMIC DNA]</scope>
    <source>
        <strain>cv. Columbia</strain>
    </source>
</reference>
<reference key="2">
    <citation type="journal article" date="2017" name="Plant J.">
        <title>Araport11: a complete reannotation of the Arabidopsis thaliana reference genome.</title>
        <authorList>
            <person name="Cheng C.Y."/>
            <person name="Krishnakumar V."/>
            <person name="Chan A.P."/>
            <person name="Thibaud-Nissen F."/>
            <person name="Schobel S."/>
            <person name="Town C.D."/>
        </authorList>
    </citation>
    <scope>GENOME REANNOTATION</scope>
    <source>
        <strain>cv. Columbia</strain>
    </source>
</reference>
<reference key="3">
    <citation type="journal article" date="2003" name="Science">
        <title>Empirical analysis of transcriptional activity in the Arabidopsis genome.</title>
        <authorList>
            <person name="Yamada K."/>
            <person name="Lim J."/>
            <person name="Dale J.M."/>
            <person name="Chen H."/>
            <person name="Shinn P."/>
            <person name="Palm C.J."/>
            <person name="Southwick A.M."/>
            <person name="Wu H.C."/>
            <person name="Kim C.J."/>
            <person name="Nguyen M."/>
            <person name="Pham P.K."/>
            <person name="Cheuk R.F."/>
            <person name="Karlin-Newmann G."/>
            <person name="Liu S.X."/>
            <person name="Lam B."/>
            <person name="Sakano H."/>
            <person name="Wu T."/>
            <person name="Yu G."/>
            <person name="Miranda M."/>
            <person name="Quach H.L."/>
            <person name="Tripp M."/>
            <person name="Chang C.H."/>
            <person name="Lee J.M."/>
            <person name="Toriumi M.J."/>
            <person name="Chan M.M."/>
            <person name="Tang C.C."/>
            <person name="Onodera C.S."/>
            <person name="Deng J.M."/>
            <person name="Akiyama K."/>
            <person name="Ansari Y."/>
            <person name="Arakawa T."/>
            <person name="Banh J."/>
            <person name="Banno F."/>
            <person name="Bowser L."/>
            <person name="Brooks S.Y."/>
            <person name="Carninci P."/>
            <person name="Chao Q."/>
            <person name="Choy N."/>
            <person name="Enju A."/>
            <person name="Goldsmith A.D."/>
            <person name="Gurjal M."/>
            <person name="Hansen N.F."/>
            <person name="Hayashizaki Y."/>
            <person name="Johnson-Hopson C."/>
            <person name="Hsuan V.W."/>
            <person name="Iida K."/>
            <person name="Karnes M."/>
            <person name="Khan S."/>
            <person name="Koesema E."/>
            <person name="Ishida J."/>
            <person name="Jiang P.X."/>
            <person name="Jones T."/>
            <person name="Kawai J."/>
            <person name="Kamiya A."/>
            <person name="Meyers C."/>
            <person name="Nakajima M."/>
            <person name="Narusaka M."/>
            <person name="Seki M."/>
            <person name="Sakurai T."/>
            <person name="Satou M."/>
            <person name="Tamse R."/>
            <person name="Vaysberg M."/>
            <person name="Wallender E.K."/>
            <person name="Wong C."/>
            <person name="Yamamura Y."/>
            <person name="Yuan S."/>
            <person name="Shinozaki K."/>
            <person name="Davis R.W."/>
            <person name="Theologis A."/>
            <person name="Ecker J.R."/>
        </authorList>
    </citation>
    <scope>NUCLEOTIDE SEQUENCE [LARGE SCALE MRNA]</scope>
    <source>
        <strain>cv. Columbia</strain>
    </source>
</reference>